<protein>
    <recommendedName>
        <fullName evidence="15">Parathyroid hormone</fullName>
        <shortName evidence="14">PTH</shortName>
    </recommendedName>
    <alternativeName>
        <fullName>Parathormone</fullName>
    </alternativeName>
    <alternativeName>
        <fullName>Parathyrin</fullName>
    </alternativeName>
</protein>
<gene>
    <name evidence="14 17" type="primary">PTH</name>
</gene>
<name>PTHY_HUMAN</name>
<proteinExistence type="evidence at protein level"/>
<evidence type="ECO:0000256" key="1">
    <source>
        <dbReference type="SAM" id="MobiDB-lite"/>
    </source>
</evidence>
<evidence type="ECO:0000269" key="2">
    <source>
    </source>
</evidence>
<evidence type="ECO:0000269" key="3">
    <source>
    </source>
</evidence>
<evidence type="ECO:0000269" key="4">
    <source>
    </source>
</evidence>
<evidence type="ECO:0000269" key="5">
    <source>
    </source>
</evidence>
<evidence type="ECO:0000269" key="6">
    <source>
    </source>
</evidence>
<evidence type="ECO:0000269" key="7">
    <source>
    </source>
</evidence>
<evidence type="ECO:0000269" key="8">
    <source>
    </source>
</evidence>
<evidence type="ECO:0000269" key="9">
    <source>
    </source>
</evidence>
<evidence type="ECO:0000269" key="10">
    <source>
    </source>
</evidence>
<evidence type="ECO:0000269" key="11">
    <source>
    </source>
</evidence>
<evidence type="ECO:0000269" key="12">
    <source>
    </source>
</evidence>
<evidence type="ECO:0000269" key="13">
    <source>
    </source>
</evidence>
<evidence type="ECO:0000303" key="14">
    <source>
    </source>
</evidence>
<evidence type="ECO:0000303" key="15">
    <source>
    </source>
</evidence>
<evidence type="ECO:0000305" key="16"/>
<evidence type="ECO:0000312" key="17">
    <source>
        <dbReference type="HGNC" id="HGNC:9606"/>
    </source>
</evidence>
<evidence type="ECO:0007744" key="18">
    <source>
        <dbReference type="PDB" id="7VVK"/>
    </source>
</evidence>
<evidence type="ECO:0007744" key="19">
    <source>
        <dbReference type="PDB" id="7VVL"/>
    </source>
</evidence>
<evidence type="ECO:0007744" key="20">
    <source>
        <dbReference type="PDB" id="7VVM"/>
    </source>
</evidence>
<evidence type="ECO:0007744" key="21">
    <source>
        <dbReference type="PDB" id="7VVN"/>
    </source>
</evidence>
<evidence type="ECO:0007744" key="22">
    <source>
        <dbReference type="PDB" id="7VVO"/>
    </source>
</evidence>
<evidence type="ECO:0007829" key="23">
    <source>
        <dbReference type="PDB" id="1ET1"/>
    </source>
</evidence>
<evidence type="ECO:0007829" key="24">
    <source>
        <dbReference type="PDB" id="1ZWF"/>
    </source>
</evidence>
<sequence>MIPAKDMAKVMIVMLAICFLTKSDGKSVKKRSVSEIQLMHNLGKHLNSMERVEWLRKKLQDVHNFVALGAPLAPRDAGSQRPRKKEDNVLVESHEKSLGEADKADVNVLTKAKSQ</sequence>
<accession>P01270</accession>
<accession>Q4VB48</accession>
<accession>Q9UD38</accession>
<keyword id="KW-0002">3D-structure</keyword>
<keyword id="KW-0165">Cleavage on pair of basic residues</keyword>
<keyword id="KW-0903">Direct protein sequencing</keyword>
<keyword id="KW-0225">Disease variant</keyword>
<keyword id="KW-0372">Hormone</keyword>
<keyword id="KW-1267">Proteomics identification</keyword>
<keyword id="KW-1185">Reference proteome</keyword>
<keyword id="KW-0964">Secreted</keyword>
<keyword id="KW-0732">Signal</keyword>
<dbReference type="EMBL" id="V00597">
    <property type="protein sequence ID" value="CAA23843.1"/>
    <property type="molecule type" value="mRNA"/>
</dbReference>
<dbReference type="EMBL" id="J00301">
    <property type="protein sequence ID" value="AAA60215.1"/>
    <property type="molecule type" value="Genomic_DNA"/>
</dbReference>
<dbReference type="EMBL" id="BC096142">
    <property type="protein sequence ID" value="AAH96142.1"/>
    <property type="molecule type" value="mRNA"/>
</dbReference>
<dbReference type="EMBL" id="BC096143">
    <property type="protein sequence ID" value="AAH96143.1"/>
    <property type="molecule type" value="mRNA"/>
</dbReference>
<dbReference type="EMBL" id="BC096144">
    <property type="protein sequence ID" value="AAH96144.1"/>
    <property type="molecule type" value="mRNA"/>
</dbReference>
<dbReference type="EMBL" id="BC096145">
    <property type="protein sequence ID" value="AAH96145.1"/>
    <property type="molecule type" value="mRNA"/>
</dbReference>
<dbReference type="CCDS" id="CCDS7812.1"/>
<dbReference type="PIR" id="A19339">
    <property type="entry name" value="PTHU"/>
</dbReference>
<dbReference type="RefSeq" id="NP_000306.1">
    <property type="nucleotide sequence ID" value="NM_000315.4"/>
</dbReference>
<dbReference type="PDB" id="1BWX">
    <property type="method" value="NMR"/>
    <property type="chains" value="A=32-70"/>
</dbReference>
<dbReference type="PDB" id="1ET1">
    <property type="method" value="X-ray"/>
    <property type="resolution" value="0.90 A"/>
    <property type="chains" value="A/B=32-65"/>
</dbReference>
<dbReference type="PDB" id="1FVY">
    <property type="method" value="NMR"/>
    <property type="chains" value="A=32-62"/>
</dbReference>
<dbReference type="PDB" id="1HPH">
    <property type="method" value="NMR"/>
    <property type="chains" value="A=32-68"/>
</dbReference>
<dbReference type="PDB" id="1HPY">
    <property type="method" value="NMR"/>
    <property type="chains" value="A=32-65"/>
</dbReference>
<dbReference type="PDB" id="1HTH">
    <property type="method" value="NMR"/>
    <property type="chains" value="A=32-65"/>
</dbReference>
<dbReference type="PDB" id="1ZWA">
    <property type="method" value="NMR"/>
    <property type="chains" value="A=32-65"/>
</dbReference>
<dbReference type="PDB" id="1ZWB">
    <property type="method" value="NMR"/>
    <property type="chains" value="A=33-68"/>
</dbReference>
<dbReference type="PDB" id="1ZWD">
    <property type="method" value="NMR"/>
    <property type="chains" value="A=34-68"/>
</dbReference>
<dbReference type="PDB" id="1ZWE">
    <property type="method" value="NMR"/>
    <property type="chains" value="A=35-68"/>
</dbReference>
<dbReference type="PDB" id="1ZWF">
    <property type="method" value="NMR"/>
    <property type="chains" value="A=35-68"/>
</dbReference>
<dbReference type="PDB" id="1ZWG">
    <property type="method" value="NMR"/>
    <property type="chains" value="A=35-68"/>
</dbReference>
<dbReference type="PDB" id="2L1X">
    <property type="method" value="NMR"/>
    <property type="chains" value="A=32-65"/>
</dbReference>
<dbReference type="PDB" id="3C4M">
    <property type="method" value="X-ray"/>
    <property type="resolution" value="1.95 A"/>
    <property type="chains" value="C/D=46-65"/>
</dbReference>
<dbReference type="PDB" id="7VVK">
    <property type="method" value="EM"/>
    <property type="resolution" value="3.30 A"/>
    <property type="chains" value="P=32-65"/>
</dbReference>
<dbReference type="PDB" id="7VVL">
    <property type="method" value="EM"/>
    <property type="resolution" value="2.80 A"/>
    <property type="chains" value="P=32-65"/>
</dbReference>
<dbReference type="PDB" id="7VVM">
    <property type="method" value="EM"/>
    <property type="resolution" value="3.20 A"/>
    <property type="chains" value="P=32-65"/>
</dbReference>
<dbReference type="PDB" id="7VVN">
    <property type="method" value="EM"/>
    <property type="resolution" value="3.80 A"/>
    <property type="chains" value="P=32-65"/>
</dbReference>
<dbReference type="PDB" id="7VVO">
    <property type="method" value="EM"/>
    <property type="resolution" value="4.10 A"/>
    <property type="chains" value="P=32-65"/>
</dbReference>
<dbReference type="PDB" id="7Y36">
    <property type="method" value="EM"/>
    <property type="resolution" value="2.80 A"/>
    <property type="chains" value="P=32-65"/>
</dbReference>
<dbReference type="PDB" id="8FLQ">
    <property type="method" value="EM"/>
    <property type="resolution" value="2.55 A"/>
    <property type="chains" value="P=32-65"/>
</dbReference>
<dbReference type="PDB" id="8HA0">
    <property type="method" value="EM"/>
    <property type="resolution" value="2.62 A"/>
    <property type="chains" value="P=32-65"/>
</dbReference>
<dbReference type="PDB" id="8HAO">
    <property type="method" value="EM"/>
    <property type="resolution" value="3.76 A"/>
    <property type="chains" value="H/P=32-65"/>
</dbReference>
<dbReference type="PDB" id="8T5F">
    <property type="method" value="X-ray"/>
    <property type="resolution" value="1.99 A"/>
    <property type="chains" value="A/B/C=32-65"/>
</dbReference>
<dbReference type="PDB" id="9JR2">
    <property type="method" value="EM"/>
    <property type="resolution" value="2.80 A"/>
    <property type="chains" value="P=32-65"/>
</dbReference>
<dbReference type="PDB" id="9JR3">
    <property type="method" value="EM"/>
    <property type="resolution" value="2.80 A"/>
    <property type="chains" value="P=32-65"/>
</dbReference>
<dbReference type="PDBsum" id="1BWX"/>
<dbReference type="PDBsum" id="1ET1"/>
<dbReference type="PDBsum" id="1FVY"/>
<dbReference type="PDBsum" id="1HPH"/>
<dbReference type="PDBsum" id="1HPY"/>
<dbReference type="PDBsum" id="1HTH"/>
<dbReference type="PDBsum" id="1ZWA"/>
<dbReference type="PDBsum" id="1ZWB"/>
<dbReference type="PDBsum" id="1ZWD"/>
<dbReference type="PDBsum" id="1ZWE"/>
<dbReference type="PDBsum" id="1ZWF"/>
<dbReference type="PDBsum" id="1ZWG"/>
<dbReference type="PDBsum" id="2L1X"/>
<dbReference type="PDBsum" id="3C4M"/>
<dbReference type="PDBsum" id="7VVK"/>
<dbReference type="PDBsum" id="7VVL"/>
<dbReference type="PDBsum" id="7VVM"/>
<dbReference type="PDBsum" id="7VVN"/>
<dbReference type="PDBsum" id="7VVO"/>
<dbReference type="PDBsum" id="7Y36"/>
<dbReference type="PDBsum" id="8FLQ"/>
<dbReference type="PDBsum" id="8HA0"/>
<dbReference type="PDBsum" id="8HAO"/>
<dbReference type="PDBsum" id="8T5F"/>
<dbReference type="PDBsum" id="9JR2"/>
<dbReference type="PDBsum" id="9JR3"/>
<dbReference type="BMRB" id="P01270"/>
<dbReference type="EMDB" id="EMD-29283"/>
<dbReference type="EMDB" id="EMD-32142"/>
<dbReference type="EMDB" id="EMD-32143"/>
<dbReference type="EMDB" id="EMD-32144"/>
<dbReference type="EMDB" id="EMD-32145"/>
<dbReference type="EMDB" id="EMD-32146"/>
<dbReference type="EMDB" id="EMD-33590"/>
<dbReference type="EMDB" id="EMD-34585"/>
<dbReference type="EMDB" id="EMD-34598"/>
<dbReference type="EMDB" id="EMD-61746"/>
<dbReference type="EMDB" id="EMD-61747"/>
<dbReference type="SMR" id="P01270"/>
<dbReference type="BioGRID" id="111713">
    <property type="interactions" value="11"/>
</dbReference>
<dbReference type="CORUM" id="P01270"/>
<dbReference type="FunCoup" id="P01270">
    <property type="interactions" value="420"/>
</dbReference>
<dbReference type="IntAct" id="P01270">
    <property type="interactions" value="5"/>
</dbReference>
<dbReference type="STRING" id="9606.ENSP00000433208"/>
<dbReference type="BindingDB" id="P01270"/>
<dbReference type="DrugBank" id="DB05883">
    <property type="generic name" value="ABX-PTH"/>
</dbReference>
<dbReference type="DrugBank" id="DB04419">
    <property type="generic name" value="D-norleucine"/>
</dbReference>
<dbReference type="DrugBank" id="DB06285">
    <property type="generic name" value="Teriparatide"/>
</dbReference>
<dbReference type="GlyGen" id="P01270">
    <property type="glycosylation" value="1 site"/>
</dbReference>
<dbReference type="iPTMnet" id="P01270"/>
<dbReference type="MetOSite" id="P01270"/>
<dbReference type="PhosphoSitePlus" id="P01270"/>
<dbReference type="BioMuta" id="PTH"/>
<dbReference type="DMDM" id="131547"/>
<dbReference type="PaxDb" id="9606-ENSP00000282091"/>
<dbReference type="PeptideAtlas" id="P01270"/>
<dbReference type="ABCD" id="P01270">
    <property type="antibodies" value="13 sequenced antibodies"/>
</dbReference>
<dbReference type="Antibodypedia" id="11928">
    <property type="antibodies" value="2325 antibodies from 42 providers"/>
</dbReference>
<dbReference type="DNASU" id="5741"/>
<dbReference type="Ensembl" id="ENST00000282091.6">
    <property type="protein sequence ID" value="ENSP00000282091.1"/>
    <property type="gene ID" value="ENSG00000152266.7"/>
</dbReference>
<dbReference type="Ensembl" id="ENST00000529816.1">
    <property type="protein sequence ID" value="ENSP00000433208.1"/>
    <property type="gene ID" value="ENSG00000152266.7"/>
</dbReference>
<dbReference type="GeneID" id="5741"/>
<dbReference type="KEGG" id="hsa:5741"/>
<dbReference type="MANE-Select" id="ENST00000282091.6">
    <property type="protein sequence ID" value="ENSP00000282091.1"/>
    <property type="RefSeq nucleotide sequence ID" value="NM_000315.4"/>
    <property type="RefSeq protein sequence ID" value="NP_000306.1"/>
</dbReference>
<dbReference type="UCSC" id="uc001mlb.4">
    <property type="organism name" value="human"/>
</dbReference>
<dbReference type="AGR" id="HGNC:9606"/>
<dbReference type="CTD" id="5741"/>
<dbReference type="DisGeNET" id="5741"/>
<dbReference type="GeneCards" id="PTH"/>
<dbReference type="HGNC" id="HGNC:9606">
    <property type="gene designation" value="PTH"/>
</dbReference>
<dbReference type="HPA" id="ENSG00000152266">
    <property type="expression patterns" value="Tissue enriched (parathyroid)"/>
</dbReference>
<dbReference type="MalaCards" id="PTH"/>
<dbReference type="MIM" id="146200">
    <property type="type" value="phenotype"/>
</dbReference>
<dbReference type="MIM" id="168450">
    <property type="type" value="gene"/>
</dbReference>
<dbReference type="neXtProt" id="NX_P01270"/>
<dbReference type="OpenTargets" id="ENSG00000152266"/>
<dbReference type="Orphanet" id="189466">
    <property type="disease" value="Familial isolated hypoparathyroidism due to impaired PTH secretion"/>
</dbReference>
<dbReference type="PharmGKB" id="PA33951"/>
<dbReference type="VEuPathDB" id="HostDB:ENSG00000152266"/>
<dbReference type="eggNOG" id="ENOG502SB2W">
    <property type="taxonomic scope" value="Eukaryota"/>
</dbReference>
<dbReference type="GeneTree" id="ENSGT00390000018603"/>
<dbReference type="HOGENOM" id="CLU_164143_0_0_1"/>
<dbReference type="InParanoid" id="P01270"/>
<dbReference type="OMA" id="MKLQDVH"/>
<dbReference type="OrthoDB" id="9890537at2759"/>
<dbReference type="PAN-GO" id="P01270">
    <property type="GO annotations" value="4 GO annotations based on evolutionary models"/>
</dbReference>
<dbReference type="PhylomeDB" id="P01270"/>
<dbReference type="TreeFam" id="TF336197"/>
<dbReference type="PathwayCommons" id="P01270"/>
<dbReference type="Reactome" id="R-HSA-373080">
    <property type="pathway name" value="Class B/2 (Secretin family receptors)"/>
</dbReference>
<dbReference type="Reactome" id="R-HSA-418555">
    <property type="pathway name" value="G alpha (s) signalling events"/>
</dbReference>
<dbReference type="SignaLink" id="P01270"/>
<dbReference type="SIGNOR" id="P01270"/>
<dbReference type="BioGRID-ORCS" id="5741">
    <property type="hits" value="14 hits in 1116 CRISPR screens"/>
</dbReference>
<dbReference type="EvolutionaryTrace" id="P01270"/>
<dbReference type="GeneWiki" id="Parathyroid_hormone"/>
<dbReference type="GenomeRNAi" id="5741"/>
<dbReference type="Pharos" id="P01270">
    <property type="development level" value="Tbio"/>
</dbReference>
<dbReference type="PRO" id="PR:P01270"/>
<dbReference type="Proteomes" id="UP000005640">
    <property type="component" value="Chromosome 11"/>
</dbReference>
<dbReference type="RNAct" id="P01270">
    <property type="molecule type" value="protein"/>
</dbReference>
<dbReference type="Bgee" id="ENSG00000152266">
    <property type="expression patterns" value="Expressed in male germ line stem cell (sensu Vertebrata) in testis and 92 other cell types or tissues"/>
</dbReference>
<dbReference type="GO" id="GO:0005576">
    <property type="term" value="C:extracellular region"/>
    <property type="evidence" value="ECO:0000304"/>
    <property type="project" value="Reactome"/>
</dbReference>
<dbReference type="GO" id="GO:0005615">
    <property type="term" value="C:extracellular space"/>
    <property type="evidence" value="ECO:0000318"/>
    <property type="project" value="GO_Central"/>
</dbReference>
<dbReference type="GO" id="GO:0005179">
    <property type="term" value="F:hormone activity"/>
    <property type="evidence" value="ECO:0000315"/>
    <property type="project" value="CAFA"/>
</dbReference>
<dbReference type="GO" id="GO:0031856">
    <property type="term" value="F:parathyroid hormone receptor binding"/>
    <property type="evidence" value="ECO:0000318"/>
    <property type="project" value="GO_Central"/>
</dbReference>
<dbReference type="GO" id="GO:0051428">
    <property type="term" value="F:peptide hormone receptor binding"/>
    <property type="evidence" value="ECO:0000314"/>
    <property type="project" value="UniProtKB"/>
</dbReference>
<dbReference type="GO" id="GO:0048018">
    <property type="term" value="F:receptor ligand activity"/>
    <property type="evidence" value="ECO:0000315"/>
    <property type="project" value="CAFA"/>
</dbReference>
<dbReference type="GO" id="GO:0031857">
    <property type="term" value="F:type 1 parathyroid hormone receptor binding"/>
    <property type="evidence" value="ECO:0000315"/>
    <property type="project" value="CAFA"/>
</dbReference>
<dbReference type="GO" id="GO:0007189">
    <property type="term" value="P:adenylate cyclase-activating G protein-coupled receptor signaling pathway"/>
    <property type="evidence" value="ECO:0000314"/>
    <property type="project" value="MGI"/>
</dbReference>
<dbReference type="GO" id="GO:0030282">
    <property type="term" value="P:bone mineralization"/>
    <property type="evidence" value="ECO:0007669"/>
    <property type="project" value="Ensembl"/>
</dbReference>
<dbReference type="GO" id="GO:0045453">
    <property type="term" value="P:bone resorption"/>
    <property type="evidence" value="ECO:0000303"/>
    <property type="project" value="UniProtKB"/>
</dbReference>
<dbReference type="GO" id="GO:0046058">
    <property type="term" value="P:cAMP metabolic process"/>
    <property type="evidence" value="ECO:0000304"/>
    <property type="project" value="ProtInc"/>
</dbReference>
<dbReference type="GO" id="GO:0007267">
    <property type="term" value="P:cell-cell signaling"/>
    <property type="evidence" value="ECO:0000318"/>
    <property type="project" value="GO_Central"/>
</dbReference>
<dbReference type="GO" id="GO:0007186">
    <property type="term" value="P:G protein-coupled receptor signaling pathway"/>
    <property type="evidence" value="ECO:0000304"/>
    <property type="project" value="ProtInc"/>
</dbReference>
<dbReference type="GO" id="GO:0048873">
    <property type="term" value="P:homeostasis of number of cells within a tissue"/>
    <property type="evidence" value="ECO:0007669"/>
    <property type="project" value="Ensembl"/>
</dbReference>
<dbReference type="GO" id="GO:0008628">
    <property type="term" value="P:hormone-mediated apoptotic signaling pathway"/>
    <property type="evidence" value="ECO:0000304"/>
    <property type="project" value="ProtInc"/>
</dbReference>
<dbReference type="GO" id="GO:0006874">
    <property type="term" value="P:intracellular calcium ion homeostasis"/>
    <property type="evidence" value="ECO:0007669"/>
    <property type="project" value="Ensembl"/>
</dbReference>
<dbReference type="GO" id="GO:0009059">
    <property type="term" value="P:macromolecule biosynthetic process"/>
    <property type="evidence" value="ECO:0000314"/>
    <property type="project" value="MGI"/>
</dbReference>
<dbReference type="GO" id="GO:0010960">
    <property type="term" value="P:magnesium ion homeostasis"/>
    <property type="evidence" value="ECO:0007669"/>
    <property type="project" value="Ensembl"/>
</dbReference>
<dbReference type="GO" id="GO:0071866">
    <property type="term" value="P:negative regulation of apoptotic process in bone marrow cell"/>
    <property type="evidence" value="ECO:0007669"/>
    <property type="project" value="Ensembl"/>
</dbReference>
<dbReference type="GO" id="GO:1900158">
    <property type="term" value="P:negative regulation of bone mineralization involved in bone maturation"/>
    <property type="evidence" value="ECO:0007669"/>
    <property type="project" value="Ensembl"/>
</dbReference>
<dbReference type="GO" id="GO:0032331">
    <property type="term" value="P:negative regulation of chondrocyte differentiation"/>
    <property type="evidence" value="ECO:0007669"/>
    <property type="project" value="Ensembl"/>
</dbReference>
<dbReference type="GO" id="GO:0010629">
    <property type="term" value="P:negative regulation of gene expression"/>
    <property type="evidence" value="ECO:0000314"/>
    <property type="project" value="GO_Central"/>
</dbReference>
<dbReference type="GO" id="GO:0055062">
    <property type="term" value="P:phosphate ion homeostasis"/>
    <property type="evidence" value="ECO:0007669"/>
    <property type="project" value="Ensembl"/>
</dbReference>
<dbReference type="GO" id="GO:0030501">
    <property type="term" value="P:positive regulation of bone mineralization"/>
    <property type="evidence" value="ECO:0000314"/>
    <property type="project" value="UniProtKB"/>
</dbReference>
<dbReference type="GO" id="GO:0071864">
    <property type="term" value="P:positive regulation of cell proliferation in bone marrow"/>
    <property type="evidence" value="ECO:0007669"/>
    <property type="project" value="Ensembl"/>
</dbReference>
<dbReference type="GO" id="GO:0046326">
    <property type="term" value="P:positive regulation of D-glucose import"/>
    <property type="evidence" value="ECO:0000314"/>
    <property type="project" value="UniProtKB"/>
</dbReference>
<dbReference type="GO" id="GO:0010628">
    <property type="term" value="P:positive regulation of gene expression"/>
    <property type="evidence" value="ECO:0007669"/>
    <property type="project" value="Ensembl"/>
</dbReference>
<dbReference type="GO" id="GO:0045725">
    <property type="term" value="P:positive regulation of glycogen biosynthetic process"/>
    <property type="evidence" value="ECO:0000314"/>
    <property type="project" value="UniProtKB"/>
</dbReference>
<dbReference type="GO" id="GO:0060732">
    <property type="term" value="P:positive regulation of inositol phosphate biosynthetic process"/>
    <property type="evidence" value="ECO:0000315"/>
    <property type="project" value="CAFA"/>
</dbReference>
<dbReference type="GO" id="GO:0090290">
    <property type="term" value="P:positive regulation of osteoclast proliferation"/>
    <property type="evidence" value="ECO:0007669"/>
    <property type="project" value="Ensembl"/>
</dbReference>
<dbReference type="GO" id="GO:0009967">
    <property type="term" value="P:positive regulation of signal transduction"/>
    <property type="evidence" value="ECO:0007669"/>
    <property type="project" value="Ensembl"/>
</dbReference>
<dbReference type="GO" id="GO:0045944">
    <property type="term" value="P:positive regulation of transcription by RNA polymerase II"/>
    <property type="evidence" value="ECO:0000314"/>
    <property type="project" value="MGI"/>
</dbReference>
<dbReference type="GO" id="GO:0010468">
    <property type="term" value="P:regulation of gene expression"/>
    <property type="evidence" value="ECO:0000314"/>
    <property type="project" value="MGI"/>
</dbReference>
<dbReference type="GO" id="GO:0046686">
    <property type="term" value="P:response to cadmium ion"/>
    <property type="evidence" value="ECO:0007669"/>
    <property type="project" value="Ensembl"/>
</dbReference>
<dbReference type="GO" id="GO:0045471">
    <property type="term" value="P:response to ethanol"/>
    <property type="evidence" value="ECO:0007669"/>
    <property type="project" value="Ensembl"/>
</dbReference>
<dbReference type="GO" id="GO:0071774">
    <property type="term" value="P:response to fibroblast growth factor"/>
    <property type="evidence" value="ECO:0007669"/>
    <property type="project" value="Ensembl"/>
</dbReference>
<dbReference type="GO" id="GO:0010288">
    <property type="term" value="P:response to lead ion"/>
    <property type="evidence" value="ECO:0007669"/>
    <property type="project" value="Ensembl"/>
</dbReference>
<dbReference type="GO" id="GO:0071107">
    <property type="term" value="P:response to parathyroid hormone"/>
    <property type="evidence" value="ECO:0007669"/>
    <property type="project" value="Ensembl"/>
</dbReference>
<dbReference type="GO" id="GO:0033280">
    <property type="term" value="P:response to vitamin D"/>
    <property type="evidence" value="ECO:0007669"/>
    <property type="project" value="Ensembl"/>
</dbReference>
<dbReference type="GO" id="GO:0009410">
    <property type="term" value="P:response to xenobiotic stimulus"/>
    <property type="evidence" value="ECO:0007669"/>
    <property type="project" value="Ensembl"/>
</dbReference>
<dbReference type="GO" id="GO:0007266">
    <property type="term" value="P:Rho protein signal transduction"/>
    <property type="evidence" value="ECO:0007669"/>
    <property type="project" value="Ensembl"/>
</dbReference>
<dbReference type="GO" id="GO:0001501">
    <property type="term" value="P:skeletal system development"/>
    <property type="evidence" value="ECO:0000304"/>
    <property type="project" value="ProtInc"/>
</dbReference>
<dbReference type="GO" id="GO:0006366">
    <property type="term" value="P:transcription by RNA polymerase II"/>
    <property type="evidence" value="ECO:0007669"/>
    <property type="project" value="Ensembl"/>
</dbReference>
<dbReference type="InterPro" id="IPR003625">
    <property type="entry name" value="PTH"/>
</dbReference>
<dbReference type="InterPro" id="IPR001415">
    <property type="entry name" value="PTH/PTH-rel"/>
</dbReference>
<dbReference type="PANTHER" id="PTHR10541">
    <property type="entry name" value="PARATHYROID HORMONE"/>
    <property type="match status" value="1"/>
</dbReference>
<dbReference type="PANTHER" id="PTHR10541:SF2">
    <property type="entry name" value="PARATHYROID HORMONE"/>
    <property type="match status" value="1"/>
</dbReference>
<dbReference type="Pfam" id="PF01279">
    <property type="entry name" value="Parathyroid"/>
    <property type="match status" value="1"/>
</dbReference>
<dbReference type="PIRSF" id="PIRSF001832">
    <property type="entry name" value="PTH"/>
    <property type="match status" value="1"/>
</dbReference>
<dbReference type="SMART" id="SM00087">
    <property type="entry name" value="PTH"/>
    <property type="match status" value="1"/>
</dbReference>
<dbReference type="PROSITE" id="PS00335">
    <property type="entry name" value="PARATHYROID"/>
    <property type="match status" value="1"/>
</dbReference>
<feature type="signal peptide" evidence="4 12">
    <location>
        <begin position="1"/>
        <end position="25"/>
    </location>
</feature>
<feature type="propeptide" id="PRO_0000023249" evidence="10 11">
    <location>
        <begin position="26"/>
        <end position="31"/>
    </location>
</feature>
<feature type="chain" id="PRO_0000023250" description="Parathyroid hormone">
    <location>
        <begin position="32"/>
        <end position="115"/>
    </location>
</feature>
<feature type="region of interest" description="Important for receptor binding" evidence="6">
    <location>
        <begin position="51"/>
        <end position="69"/>
    </location>
</feature>
<feature type="region of interest" description="Disordered" evidence="1">
    <location>
        <begin position="73"/>
        <end position="115"/>
    </location>
</feature>
<feature type="compositionally biased region" description="Basic and acidic residues" evidence="1">
    <location>
        <begin position="84"/>
        <end position="105"/>
    </location>
</feature>
<feature type="sequence variant" id="VAR_006047" description="In FIH1; dominant form; leads to inefficient processing of the precursor; the expressed mutant hormone is trapped intracellularly in the endoplasmic reticulum resulting in apoptosis; mutant protein-expressing cells also show marked up-regulation of the endoplasmic reticulum stress-responsive hormones HSPA5 and EIF2AK3 and the proapoptotic transcription factor DDIT3; dbSNP:rs104894271." evidence="5 8 13">
    <original>C</original>
    <variation>R</variation>
    <location>
        <position position="18"/>
    </location>
</feature>
<feature type="sequence variant" id="VAR_018464" description="In FIH1; recessive form; might lead to inefficient processing of the precursor; dbSNP:rs104894272." evidence="2">
    <original>S</original>
    <variation>P</variation>
    <location>
        <position position="23"/>
    </location>
</feature>
<feature type="mutagenesis site" description="Abolishes processing of the precursor; when associated with variant R-18." evidence="13">
    <original>A</original>
    <variation>R</variation>
    <location>
        <position position="16"/>
    </location>
</feature>
<feature type="mutagenesis site" description="Reduced affinity for PTH1R." evidence="6">
    <original>R</original>
    <variation>A</variation>
    <location>
        <position position="51"/>
    </location>
</feature>
<feature type="mutagenesis site" description="Strongly reduced affinity for PTH1R." evidence="6">
    <original>W</original>
    <variation>A</variation>
    <location>
        <position position="54"/>
    </location>
</feature>
<feature type="mutagenesis site" description="Strongly reduced affinity for PTH1R." evidence="6">
    <original>L</original>
    <variation>A</variation>
    <location>
        <position position="55"/>
    </location>
</feature>
<feature type="mutagenesis site" description="Reduced affinity for PTH1R." evidence="6">
    <original>K</original>
    <variation>A</variation>
    <location>
        <position position="58"/>
    </location>
</feature>
<feature type="mutagenesis site" description="Strongly reduced affinity for PTH1R." evidence="6">
    <original>L</original>
    <variation>A</variation>
    <location>
        <position position="59"/>
    </location>
</feature>
<feature type="sequence conflict" description="In Ref. 9; AA sequence." evidence="16" ref="9">
    <original>N</original>
    <variation>D</variation>
    <location>
        <position position="107"/>
    </location>
</feature>
<feature type="helix" evidence="23">
    <location>
        <begin position="34"/>
        <end position="64"/>
    </location>
</feature>
<feature type="helix" evidence="24">
    <location>
        <begin position="65"/>
        <end position="67"/>
    </location>
</feature>
<comment type="function">
    <text evidence="3 6 7 9">Parathyroid hormone elevates calcium level by dissolving the salts in bone and preventing their renal excretion (PubMed:11604398, PubMed:35932760). Acts by binding to its receptor, PTH1R, activating G protein-coupled receptor signaling (PubMed:18375760, PubMed:35932760). Stimulates [1-14C]-2-deoxy-D-glucose (2DG) transport and glycogen synthesis in osteoblastic cells (PubMed:21076856).</text>
</comment>
<comment type="subunit">
    <text evidence="6 9">Interacts with PTH1R (via N-terminal extracellular domain).</text>
</comment>
<comment type="interaction">
    <interactant intactId="EBI-716817">
        <id>P01270</id>
    </interactant>
    <interactant intactId="EBI-12092171">
        <id>Q12797-6</id>
        <label>ASPH</label>
    </interactant>
    <organismsDiffer>false</organismsDiffer>
    <experiments>3</experiments>
</comment>
<comment type="interaction">
    <interactant intactId="EBI-716817">
        <id>P01270</id>
    </interactant>
    <interactant intactId="EBI-2860297">
        <id>Q03431</id>
        <label>PTH1R</label>
    </interactant>
    <organismsDiffer>false</organismsDiffer>
    <experiments>6</experiments>
</comment>
<comment type="subcellular location">
    <subcellularLocation>
        <location evidence="10 13">Secreted</location>
    </subcellularLocation>
</comment>
<comment type="disease" evidence="2 5 8">
    <disease id="DI-01590">
        <name>Hypoparathyroidism, familial isolated, 1</name>
        <acronym>FIH1</acronym>
        <description>A form of hypoparathyroidism, a disorder characterized by hypocalcemia and hyperphosphatemia due to a deficiency of parathyroid hormone. Clinical features include seizures, tetany and cramps. FIH1 inheritance can be autosomal dominant or recessive.</description>
        <dbReference type="MIM" id="146200"/>
    </disease>
    <text>The disease is caused by variants affecting the gene represented in this entry.</text>
</comment>
<comment type="similarity">
    <text evidence="16">Belongs to the parathyroid hormone family.</text>
</comment>
<comment type="online information" name="Wikipedia">
    <link uri="https://en.wikipedia.org/wiki/Parathyroid_hormone"/>
    <text>Parathyroid hormone entry</text>
</comment>
<organism>
    <name type="scientific">Homo sapiens</name>
    <name type="common">Human</name>
    <dbReference type="NCBI Taxonomy" id="9606"/>
    <lineage>
        <taxon>Eukaryota</taxon>
        <taxon>Metazoa</taxon>
        <taxon>Chordata</taxon>
        <taxon>Craniata</taxon>
        <taxon>Vertebrata</taxon>
        <taxon>Euteleostomi</taxon>
        <taxon>Mammalia</taxon>
        <taxon>Eutheria</taxon>
        <taxon>Euarchontoglires</taxon>
        <taxon>Primates</taxon>
        <taxon>Haplorrhini</taxon>
        <taxon>Catarrhini</taxon>
        <taxon>Hominidae</taxon>
        <taxon>Homo</taxon>
    </lineage>
</organism>
<reference key="1">
    <citation type="journal article" date="1981" name="Proc. Natl. Acad. Sci. U.S.A.">
        <title>Nucleotide sequence of cloned cDNAs encoding human preproparathyroid hormone.</title>
        <authorList>
            <person name="Hendy G.N."/>
            <person name="Kronenberg H.M."/>
            <person name="Potts J.T. Jr."/>
            <person name="Rich A."/>
        </authorList>
    </citation>
    <scope>NUCLEOTIDE SEQUENCE [MRNA]</scope>
</reference>
<reference key="2">
    <citation type="journal article" date="1983" name="Proc. Natl. Acad. Sci. U.S.A.">
        <title>Nucleotide sequence of the human parathyroid hormone gene.</title>
        <authorList>
            <person name="Vasicek T.J."/>
            <person name="McCevitt B.E."/>
            <person name="Freeman M.W."/>
            <person name="Fennick B.J."/>
            <person name="Hendy G.N."/>
            <person name="Potts J.T. Jr."/>
            <person name="Rich A."/>
            <person name="Kronenberg H.M."/>
        </authorList>
    </citation>
    <scope>NUCLEOTIDE SEQUENCE [GENOMIC DNA]</scope>
</reference>
<reference key="3">
    <citation type="journal article" date="2004" name="Genome Res.">
        <title>The status, quality, and expansion of the NIH full-length cDNA project: the Mammalian Gene Collection (MGC).</title>
        <authorList>
            <consortium name="The MGC Project Team"/>
        </authorList>
    </citation>
    <scope>NUCLEOTIDE SEQUENCE [LARGE SCALE MRNA]</scope>
</reference>
<reference key="4">
    <citation type="journal article" date="1995" name="J. Biol. Chem.">
        <title>Inefficient membrane targeting, translocation, and proteolytic processing by signal peptidase of a mutant preproparathyroid hormone protein.</title>
        <authorList>
            <person name="Karaplis A.C."/>
            <person name="Lim S.-K."/>
            <person name="Baba H."/>
            <person name="Arnold A."/>
            <person name="Kronenberg H.M."/>
        </authorList>
    </citation>
    <scope>NUCLEOTIDE SEQUENCE [MRNA] OF 1-31</scope>
    <scope>SUBCELLULAR LOCATION</scope>
    <scope>MUTAGENESIS OF ALA-16</scope>
    <scope>VARIANT ARG-18</scope>
</reference>
<reference key="5">
    <citation type="journal article" date="1974" name="Nature">
        <title>Structural analysis of human proparathyroid hormone by a new microsequencing approach.</title>
        <authorList>
            <person name="Jacobs J.W."/>
            <person name="Kemper B."/>
            <person name="Niall H.D."/>
            <person name="Habener J.F."/>
            <person name="Potts J.T. Jr."/>
        </authorList>
    </citation>
    <scope>PROTEIN SEQUENCE OF 26-37</scope>
</reference>
<reference key="6">
    <citation type="journal article" date="2004" name="Protein Sci.">
        <title>Signal peptide prediction based on analysis of experimentally verified cleavage sites.</title>
        <authorList>
            <person name="Zhang Z."/>
            <person name="Henzel W.J."/>
        </authorList>
    </citation>
    <scope>PROTEIN SEQUENCE OF 26-40</scope>
</reference>
<reference key="7">
    <citation type="journal article" date="1972" name="Proc. Natl. Acad. Sci. U.S.A.">
        <title>Human parathyroid hormone: amino-acid sequence of the amino-terminal residues 1-34.</title>
        <authorList>
            <person name="Brewer H.B. Jr."/>
            <person name="Fairwell T."/>
            <person name="Ronan R."/>
            <person name="Sizemore G.W."/>
            <person name="Arnaud C.D."/>
        </authorList>
    </citation>
    <scope>PROTEIN SEQUENCE OF 32-65</scope>
    <scope>SUBCELLULAR LOCATION</scope>
</reference>
<reference key="8">
    <citation type="journal article" date="1974" name="Proc. Natl. Acad. Sci. U.S.A.">
        <title>The amino-acid sequence of the amino-terminal 37 residues of human parathyroid hormone.</title>
        <authorList>
            <person name="Niall H.D."/>
            <person name="Sauer R.T."/>
            <person name="Jacobs J.W."/>
            <person name="Keutmann H.T."/>
            <person name="Segre G.V."/>
            <person name="O'Riordan J.L.H."/>
            <person name="Aurbach G.D."/>
            <person name="Potts J.T. Jr."/>
        </authorList>
    </citation>
    <scope>PROTEIN SEQUENCE OF 32-68</scope>
</reference>
<reference key="9">
    <citation type="journal article" date="1978" name="Biochemistry">
        <title>Complete amino acid sequence of human parathyroid hormone.</title>
        <authorList>
            <person name="Keutmann H.T."/>
            <person name="Sauer M.M."/>
            <person name="Hendy G.N."/>
            <person name="O'Riordan J.L.H."/>
            <person name="Potts J.T. Jr."/>
        </authorList>
    </citation>
    <scope>PROTEIN SEQUENCE OF 61-83 AND 84-115</scope>
</reference>
<reference key="10">
    <citation type="book" date="1975" name="Calcium-regulating hormones">
        <editorList>
            <person name="Talmadge R.V."/>
            <person name="Owen M."/>
            <person name="Parsons J.A."/>
        </editorList>
        <authorList>
            <person name="Keutmann H.T."/>
            <person name="Niall H.D."/>
            <person name="Jacobs J.W."/>
            <person name="Barling P.M."/>
            <person name="Hendy G.N."/>
            <person name="O'Riordan J.L.H."/>
            <person name="Potts J.T. Jr."/>
        </authorList>
    </citation>
    <scope>PROTEIN SEQUENCE OF 75-100</scope>
</reference>
<reference key="11">
    <citation type="journal article" date="1975" name="Biochemistry">
        <title>A reinvestigation of the amino-terminal sequence of human parathyroid hormone.</title>
        <authorList>
            <person name="Keutmann H.T."/>
            <person name="Niall H.D."/>
            <person name="O'Riordan J.L.H."/>
            <person name="Potts J.T. Jr."/>
        </authorList>
    </citation>
    <scope>SEQUENCE REVISION</scope>
</reference>
<reference key="12">
    <citation type="journal article" date="1974" name="Hoppe-Seyler's Z. Physiol. Chem.">
        <title>Solid-phase synthesis of the biologically active N-terminal 1-34 peptide of human parathyroid hormone.</title>
        <authorList>
            <person name="Tregear G.W."/>
            <person name="van Rietschoten J."/>
            <person name="Green E."/>
            <person name="Niall H.D."/>
            <person name="Keutmann H.T."/>
            <person name="Parsons J.A."/>
            <person name="O'Riordan J.L.H."/>
            <person name="Potts J.T. Jr."/>
        </authorList>
    </citation>
    <scope>SYNTHESIS OF 32-65</scope>
</reference>
<reference key="13">
    <citation type="journal article" date="1973" name="Helv. Chim. Acta">
        <title>Synthesis of sequence 1-34 of human parathyroid hormone.</title>
        <authorList>
            <person name="Andreatta R.H."/>
            <person name="Hartmann A."/>
            <person name="Joehl A."/>
            <person name="Kamber B."/>
            <person name="Maier R."/>
            <person name="Riniker B."/>
            <person name="Rittel W."/>
            <person name="Sieber P."/>
        </authorList>
    </citation>
    <scope>SYNTHESIS OF 32-65</scope>
</reference>
<reference key="14">
    <citation type="journal article" date="2001" name="J. Biol. Chem.">
        <title>Parathyroid hormone (PTH)-(1-14) and -(1-11) analogs conformationally constrained by alpha-aminoisobutyric acid mediate full agonist responses via the juxtamembrane region of the PTH-1 receptor.</title>
        <authorList>
            <person name="Shimizu N."/>
            <person name="Guo J."/>
            <person name="Gardella T.J."/>
        </authorList>
    </citation>
    <scope>FUNCTION</scope>
</reference>
<reference key="15">
    <citation type="journal article" date="2011" name="Mol. Cell. Biochem.">
        <title>Stimulation of glucose transport in osteoblastic cells by parathyroid hormone and insulin-like growth factor I.</title>
        <authorList>
            <person name="Zoidis E."/>
            <person name="Ghirlanda-Keller C."/>
            <person name="Schmid C."/>
        </authorList>
    </citation>
    <scope>FUNCTION</scope>
</reference>
<reference key="16">
    <citation type="journal article" date="1991" name="Biochemistry">
        <title>Investigation of the solution structure of the human parathyroid hormone fragment (1-34) by 1H NMR spectroscopy, distance geometry, and molecular dynamics calculations.</title>
        <authorList>
            <person name="Klaus W."/>
            <person name="Dieckmann T."/>
            <person name="Wray V."/>
            <person name="Schomburg D."/>
            <person name="Wingender E."/>
            <person name="Mayer H."/>
        </authorList>
    </citation>
    <scope>STRUCTURE BY NMR OF 32-65</scope>
</reference>
<reference key="17">
    <citation type="journal article" date="1993" name="Eur. J. Biochem.">
        <title>Stabilized NMR structure of human parathyroid hormone(1-34).</title>
        <authorList>
            <person name="Barden J.A."/>
            <person name="Cuthbertson R.M."/>
        </authorList>
    </citation>
    <scope>STRUCTURE BY NMR OF 32-65</scope>
</reference>
<reference key="18">
    <citation type="journal article" date="1995" name="J. Biol. Chem.">
        <title>Structure of human parathyroid hormone 1-37 in solution.</title>
        <authorList>
            <person name="Marx U.C."/>
            <person name="Austermann S."/>
            <person name="Bayer P."/>
            <person name="Adermann K."/>
            <person name="Ejchart A."/>
            <person name="Sticht H."/>
            <person name="Walter S."/>
            <person name="Schmid F.-X."/>
            <person name="Jaenicke R."/>
            <person name="Forssmann W.-G."/>
            <person name="Roesch P."/>
        </authorList>
    </citation>
    <scope>STRUCTURE BY NMR OF 32-68</scope>
</reference>
<reference key="19">
    <citation type="journal article" date="2000" name="Biochem. Biophys. Res. Commun.">
        <title>Solution structures of human parathyroid hormone fragments hPTH(1-34) and hPTH(1-39) and bovine parathyroid hormone fragment bPTH(1-37).</title>
        <authorList>
            <person name="Marx U.C."/>
            <person name="Adermann K."/>
            <person name="Bayer P."/>
            <person name="Forssmann W.-G."/>
            <person name="Rosch P."/>
        </authorList>
    </citation>
    <scope>STRUCTURE BY NMR OF 32-70</scope>
</reference>
<reference key="20">
    <citation type="journal article" date="2000" name="J. Biol. Chem.">
        <title>Crystal structure of human parathyroid hormone 1-34 at 0.9-A resolution.</title>
        <authorList>
            <person name="Jin L."/>
            <person name="Briggs S.L."/>
            <person name="Chandrasekhar S."/>
            <person name="Chirgadze N.Y."/>
            <person name="Clawson D.K."/>
            <person name="Schevitz R.W."/>
            <person name="Smiley D.L."/>
            <person name="Tashjian A.H."/>
            <person name="Zhang F."/>
        </authorList>
    </citation>
    <scope>X-RAY CRYSTALLOGRAPHY (0.9 ANGSTROMS) OF 32-65</scope>
</reference>
<reference key="21">
    <citation type="journal article" date="2008" name="Proc. Natl. Acad. Sci. U.S.A.">
        <title>Molecular recognition of parathyroid hormone by its G protein-coupled receptor.</title>
        <authorList>
            <person name="Pioszak A.A."/>
            <person name="Xu H.E."/>
        </authorList>
    </citation>
    <scope>X-RAY CRYSTALLOGRAPHY (1.95 ANGSTROMS) OF 46-65 IN COMPLEX WITH PTH1R</scope>
    <scope>FUNCTION</scope>
    <scope>INTERACTION WITH PTH1R</scope>
    <scope>MUTAGENESIS OF ARG-51; TRP-54; LEU-55; LYS-58 AND LEU-59</scope>
</reference>
<reference evidence="18 19 20 21 22" key="22">
    <citation type="journal article" date="2022" name="Mol. Cell">
        <title>Endogenous ligand recognition and structural transition of a human PTH receptor.</title>
        <authorList>
            <person name="Kobayashi K."/>
            <person name="Kawakami K."/>
            <person name="Kusakizako T."/>
            <person name="Miyauchi H."/>
            <person name="Tomita A."/>
            <person name="Kobayashi K."/>
            <person name="Shihoya W."/>
            <person name="Yamashita K."/>
            <person name="Nishizawa T."/>
            <person name="Kato H.E."/>
            <person name="Inoue A."/>
            <person name="Nureki O."/>
        </authorList>
    </citation>
    <scope>STRUCTURE BY ELECTRON MICROSCOPY (2.8 ANGSTROMS) OF 32-65 IN COMPLEX WITH PTH1R</scope>
    <scope>FUNCTION</scope>
    <scope>INTERACTION WITH PTH1R</scope>
</reference>
<reference key="23">
    <citation type="journal article" date="1990" name="J. Clin. Invest.">
        <title>Mutation of the signal peptide-encoding region of the preproparathyroid hormone gene in familial isolated hypoparathyroidism.</title>
        <authorList>
            <person name="Arnold A."/>
            <person name="Horst S.A."/>
            <person name="Gardella T.J."/>
            <person name="Baba H."/>
            <person name="Levine M.A."/>
            <person name="Kronenberg H.M."/>
        </authorList>
    </citation>
    <scope>VARIANT FIH1 ARG-18</scope>
</reference>
<reference key="24">
    <citation type="journal article" date="1999" name="J. Clin. Endocrinol. Metab.">
        <title>A novel mutation of the signal peptide of the preproparathyroid hormone gene associated with autosomal recessive familial isolated hypoparathyroidism.</title>
        <authorList>
            <person name="Sunthornthepvarakul T."/>
            <person name="Churesigaew S."/>
            <person name="Ngowngarmratana S."/>
        </authorList>
    </citation>
    <scope>VARIANT FIH1 PRO-23</scope>
</reference>
<reference key="25">
    <citation type="journal article" date="2007" name="Proc. Natl. Acad. Sci. U.S.A.">
        <title>Signal sequence mutation in autosomal dominant form of hypoparathyroidism induces apoptosis that is corrected by a chemical chaperone.</title>
        <authorList>
            <person name="Datta R."/>
            <person name="Waheed A."/>
            <person name="Shah G.N."/>
            <person name="Sly W.S."/>
        </authorList>
    </citation>
    <scope>CHARACTERIZATION OF VARIANT FIH1 ARG-18</scope>
</reference>